<protein>
    <recommendedName>
        <fullName evidence="1">DNA ligase</fullName>
        <ecNumber evidence="1">6.5.1.1</ecNumber>
    </recommendedName>
    <alternativeName>
        <fullName evidence="1">Polydeoxyribonucleotide synthase [ATP]</fullName>
    </alternativeName>
</protein>
<feature type="chain" id="PRO_0000365263" description="DNA ligase">
    <location>
        <begin position="1"/>
        <end position="588"/>
    </location>
</feature>
<feature type="active site" description="N6-AMP-lysine intermediate" evidence="1">
    <location>
        <position position="252"/>
    </location>
</feature>
<feature type="binding site" evidence="1">
    <location>
        <position position="250"/>
    </location>
    <ligand>
        <name>ATP</name>
        <dbReference type="ChEBI" id="CHEBI:30616"/>
    </ligand>
</feature>
<feature type="binding site" evidence="1">
    <location>
        <position position="257"/>
    </location>
    <ligand>
        <name>ATP</name>
        <dbReference type="ChEBI" id="CHEBI:30616"/>
    </ligand>
</feature>
<feature type="binding site" evidence="1">
    <location>
        <position position="272"/>
    </location>
    <ligand>
        <name>ATP</name>
        <dbReference type="ChEBI" id="CHEBI:30616"/>
    </ligand>
</feature>
<feature type="binding site" evidence="1">
    <location>
        <position position="302"/>
    </location>
    <ligand>
        <name>ATP</name>
        <dbReference type="ChEBI" id="CHEBI:30616"/>
    </ligand>
</feature>
<feature type="binding site" evidence="1">
    <location>
        <position position="342"/>
    </location>
    <ligand>
        <name>ATP</name>
        <dbReference type="ChEBI" id="CHEBI:30616"/>
    </ligand>
</feature>
<feature type="binding site" evidence="1">
    <location>
        <position position="417"/>
    </location>
    <ligand>
        <name>ATP</name>
        <dbReference type="ChEBI" id="CHEBI:30616"/>
    </ligand>
</feature>
<feature type="binding site" evidence="1">
    <location>
        <position position="423"/>
    </location>
    <ligand>
        <name>ATP</name>
        <dbReference type="ChEBI" id="CHEBI:30616"/>
    </ligand>
</feature>
<accession>A9A3K1</accession>
<gene>
    <name evidence="1" type="primary">lig</name>
    <name type="ordered locus">Nmar_1037</name>
</gene>
<comment type="function">
    <text evidence="1">DNA ligase that seals nicks in double-stranded DNA during DNA replication, DNA recombination and DNA repair.</text>
</comment>
<comment type="catalytic activity">
    <reaction evidence="1">
        <text>ATP + (deoxyribonucleotide)n-3'-hydroxyl + 5'-phospho-(deoxyribonucleotide)m = (deoxyribonucleotide)n+m + AMP + diphosphate.</text>
        <dbReference type="EC" id="6.5.1.1"/>
    </reaction>
</comment>
<comment type="cofactor">
    <cofactor evidence="1">
        <name>Mg(2+)</name>
        <dbReference type="ChEBI" id="CHEBI:18420"/>
    </cofactor>
</comment>
<comment type="similarity">
    <text evidence="1">Belongs to the ATP-dependent DNA ligase family.</text>
</comment>
<organism>
    <name type="scientific">Nitrosopumilus maritimus (strain SCM1)</name>
    <dbReference type="NCBI Taxonomy" id="436308"/>
    <lineage>
        <taxon>Archaea</taxon>
        <taxon>Nitrososphaerota</taxon>
        <taxon>Nitrososphaeria</taxon>
        <taxon>Nitrosopumilales</taxon>
        <taxon>Nitrosopumilaceae</taxon>
        <taxon>Nitrosopumilus</taxon>
    </lineage>
</organism>
<reference key="1">
    <citation type="journal article" date="2010" name="Proc. Natl. Acad. Sci. U.S.A.">
        <title>Nitrosopumilus maritimus genome reveals unique mechanisms for nitrification and autotrophy in globally distributed marine crenarchaea.</title>
        <authorList>
            <person name="Walker C.B."/>
            <person name="de la Torre J.R."/>
            <person name="Klotz M.G."/>
            <person name="Urakawa H."/>
            <person name="Pinel N."/>
            <person name="Arp D.J."/>
            <person name="Brochier-Armanet C."/>
            <person name="Chain P.S."/>
            <person name="Chan P.P."/>
            <person name="Gollabgir A."/>
            <person name="Hemp J."/>
            <person name="Hugler M."/>
            <person name="Karr E.A."/>
            <person name="Konneke M."/>
            <person name="Shin M."/>
            <person name="Lawton T.J."/>
            <person name="Lowe T."/>
            <person name="Martens-Habbena W."/>
            <person name="Sayavedra-Soto L.A."/>
            <person name="Lang D."/>
            <person name="Sievert S.M."/>
            <person name="Rosenzweig A.C."/>
            <person name="Manning G."/>
            <person name="Stahl D.A."/>
        </authorList>
    </citation>
    <scope>NUCLEOTIDE SEQUENCE [LARGE SCALE GENOMIC DNA]</scope>
    <source>
        <strain>SCM1</strain>
    </source>
</reference>
<sequence length="588" mass="66661">MEFSILADSFNKMESTRKRLELTQYLVELFKKTPQEVISKIVYLLQGKLRPDFEGVELGVAEKLAIRAISKSSGIPIKKIEEEYRKGGDLGHAATTILEQKTQTTFLVEDITVERVYETLFKIAKLEGNRSQDMKMKYISSLLNDASPLEASFILKILLGTLRLGIAENTVMDALALAFSGNKENRKILEHAYNVSSDLGKVAEVLATEGLAEVEKFKIILFNPIRPMLADRVKSEQEAIEKMGNEFAAEYKLDGERVQLHIEGDKVVLFSRSLENISSYYPDIIEKIPKTIQAENIVLEAEAVAINENTGEFLPFQELMHRRRKYKIEKAVTQYPITVNLFDILYCNGKSCLELDYKERREKMEKVVKEDDFVKHIPMAIVKNENDIEDFFENSINAGSEGLMLKTLVSPYQAGSRGSHWLKLKREYQNELGDSLDLVVIGGFFGKGRRTGNYGTLLLATYEEDEDTFTSICKVGTGFSDEDLDQLYQILNPKVTIKKNPRINSEMEADVWFEPELVIEVVASEITLSPIHKAARDKIRKGAGLALRFPKFTGKMRVEKMAEDASTNEEVITLYQGQKKVAHDKSLM</sequence>
<evidence type="ECO:0000255" key="1">
    <source>
        <dbReference type="HAMAP-Rule" id="MF_00407"/>
    </source>
</evidence>
<name>DNLI_NITMS</name>
<keyword id="KW-0067">ATP-binding</keyword>
<keyword id="KW-0131">Cell cycle</keyword>
<keyword id="KW-0132">Cell division</keyword>
<keyword id="KW-0227">DNA damage</keyword>
<keyword id="KW-0233">DNA recombination</keyword>
<keyword id="KW-0234">DNA repair</keyword>
<keyword id="KW-0235">DNA replication</keyword>
<keyword id="KW-0436">Ligase</keyword>
<keyword id="KW-0460">Magnesium</keyword>
<keyword id="KW-0479">Metal-binding</keyword>
<keyword id="KW-0547">Nucleotide-binding</keyword>
<keyword id="KW-1185">Reference proteome</keyword>
<proteinExistence type="inferred from homology"/>
<dbReference type="EC" id="6.5.1.1" evidence="1"/>
<dbReference type="EMBL" id="CP000866">
    <property type="protein sequence ID" value="ABX12933.1"/>
    <property type="molecule type" value="Genomic_DNA"/>
</dbReference>
<dbReference type="RefSeq" id="WP_012215420.1">
    <property type="nucleotide sequence ID" value="NC_010085.1"/>
</dbReference>
<dbReference type="SMR" id="A9A3K1"/>
<dbReference type="FunCoup" id="A9A3K1">
    <property type="interactions" value="119"/>
</dbReference>
<dbReference type="STRING" id="436308.Nmar_1037"/>
<dbReference type="EnsemblBacteria" id="ABX12933">
    <property type="protein sequence ID" value="ABX12933"/>
    <property type="gene ID" value="Nmar_1037"/>
</dbReference>
<dbReference type="GeneID" id="5773689"/>
<dbReference type="KEGG" id="nmr:Nmar_1037"/>
<dbReference type="eggNOG" id="arCOG01347">
    <property type="taxonomic scope" value="Archaea"/>
</dbReference>
<dbReference type="HOGENOM" id="CLU_005138_6_0_2"/>
<dbReference type="InParanoid" id="A9A3K1"/>
<dbReference type="OrthoDB" id="31274at2157"/>
<dbReference type="PhylomeDB" id="A9A3K1"/>
<dbReference type="Proteomes" id="UP000000792">
    <property type="component" value="Chromosome"/>
</dbReference>
<dbReference type="GO" id="GO:0005524">
    <property type="term" value="F:ATP binding"/>
    <property type="evidence" value="ECO:0007669"/>
    <property type="project" value="UniProtKB-UniRule"/>
</dbReference>
<dbReference type="GO" id="GO:0003677">
    <property type="term" value="F:DNA binding"/>
    <property type="evidence" value="ECO:0007669"/>
    <property type="project" value="InterPro"/>
</dbReference>
<dbReference type="GO" id="GO:0003910">
    <property type="term" value="F:DNA ligase (ATP) activity"/>
    <property type="evidence" value="ECO:0000318"/>
    <property type="project" value="GO_Central"/>
</dbReference>
<dbReference type="GO" id="GO:0046872">
    <property type="term" value="F:metal ion binding"/>
    <property type="evidence" value="ECO:0007669"/>
    <property type="project" value="UniProtKB-KW"/>
</dbReference>
<dbReference type="GO" id="GO:0051301">
    <property type="term" value="P:cell division"/>
    <property type="evidence" value="ECO:0007669"/>
    <property type="project" value="UniProtKB-KW"/>
</dbReference>
<dbReference type="GO" id="GO:0071897">
    <property type="term" value="P:DNA biosynthetic process"/>
    <property type="evidence" value="ECO:0007669"/>
    <property type="project" value="InterPro"/>
</dbReference>
<dbReference type="GO" id="GO:0006310">
    <property type="term" value="P:DNA recombination"/>
    <property type="evidence" value="ECO:0007669"/>
    <property type="project" value="UniProtKB-UniRule"/>
</dbReference>
<dbReference type="GO" id="GO:0006281">
    <property type="term" value="P:DNA repair"/>
    <property type="evidence" value="ECO:0007669"/>
    <property type="project" value="UniProtKB-UniRule"/>
</dbReference>
<dbReference type="GO" id="GO:0006273">
    <property type="term" value="P:lagging strand elongation"/>
    <property type="evidence" value="ECO:0000318"/>
    <property type="project" value="GO_Central"/>
</dbReference>
<dbReference type="CDD" id="cd07901">
    <property type="entry name" value="Adenylation_DNA_ligase_Arch_LigB"/>
    <property type="match status" value="1"/>
</dbReference>
<dbReference type="CDD" id="cd07969">
    <property type="entry name" value="OBF_DNA_ligase_I"/>
    <property type="match status" value="1"/>
</dbReference>
<dbReference type="FunFam" id="1.10.3260.10:FF:000007">
    <property type="entry name" value="DNA ligase"/>
    <property type="match status" value="1"/>
</dbReference>
<dbReference type="FunFam" id="2.40.50.140:FF:000062">
    <property type="entry name" value="DNA ligase"/>
    <property type="match status" value="1"/>
</dbReference>
<dbReference type="FunFam" id="3.30.470.30:FF:000012">
    <property type="entry name" value="Probable DNA ligase"/>
    <property type="match status" value="1"/>
</dbReference>
<dbReference type="Gene3D" id="1.10.3260.10">
    <property type="entry name" value="DNA ligase, ATP-dependent, N-terminal domain"/>
    <property type="match status" value="1"/>
</dbReference>
<dbReference type="Gene3D" id="3.30.470.30">
    <property type="entry name" value="DNA ligase/mRNA capping enzyme"/>
    <property type="match status" value="1"/>
</dbReference>
<dbReference type="Gene3D" id="2.40.50.140">
    <property type="entry name" value="Nucleic acid-binding proteins"/>
    <property type="match status" value="1"/>
</dbReference>
<dbReference type="HAMAP" id="MF_00407">
    <property type="entry name" value="DNA_ligase"/>
    <property type="match status" value="1"/>
</dbReference>
<dbReference type="InterPro" id="IPR050191">
    <property type="entry name" value="ATP-dep_DNA_ligase"/>
</dbReference>
<dbReference type="InterPro" id="IPR022865">
    <property type="entry name" value="DNA_ligae_ATP-dep_bac/arc"/>
</dbReference>
<dbReference type="InterPro" id="IPR000977">
    <property type="entry name" value="DNA_ligase_ATP-dep"/>
</dbReference>
<dbReference type="InterPro" id="IPR012309">
    <property type="entry name" value="DNA_ligase_ATP-dep_C"/>
</dbReference>
<dbReference type="InterPro" id="IPR012310">
    <property type="entry name" value="DNA_ligase_ATP-dep_cent"/>
</dbReference>
<dbReference type="InterPro" id="IPR016059">
    <property type="entry name" value="DNA_ligase_ATP-dep_CS"/>
</dbReference>
<dbReference type="InterPro" id="IPR012308">
    <property type="entry name" value="DNA_ligase_ATP-dep_N"/>
</dbReference>
<dbReference type="InterPro" id="IPR036599">
    <property type="entry name" value="DNA_ligase_N_sf"/>
</dbReference>
<dbReference type="InterPro" id="IPR012340">
    <property type="entry name" value="NA-bd_OB-fold"/>
</dbReference>
<dbReference type="NCBIfam" id="TIGR00574">
    <property type="entry name" value="dnl1"/>
    <property type="match status" value="1"/>
</dbReference>
<dbReference type="PANTHER" id="PTHR45674:SF4">
    <property type="entry name" value="DNA LIGASE 1"/>
    <property type="match status" value="1"/>
</dbReference>
<dbReference type="PANTHER" id="PTHR45674">
    <property type="entry name" value="DNA LIGASE 1/3 FAMILY MEMBER"/>
    <property type="match status" value="1"/>
</dbReference>
<dbReference type="Pfam" id="PF04679">
    <property type="entry name" value="DNA_ligase_A_C"/>
    <property type="match status" value="1"/>
</dbReference>
<dbReference type="Pfam" id="PF01068">
    <property type="entry name" value="DNA_ligase_A_M"/>
    <property type="match status" value="1"/>
</dbReference>
<dbReference type="Pfam" id="PF04675">
    <property type="entry name" value="DNA_ligase_A_N"/>
    <property type="match status" value="1"/>
</dbReference>
<dbReference type="SUPFAM" id="SSF117018">
    <property type="entry name" value="ATP-dependent DNA ligase DNA-binding domain"/>
    <property type="match status" value="1"/>
</dbReference>
<dbReference type="SUPFAM" id="SSF56091">
    <property type="entry name" value="DNA ligase/mRNA capping enzyme, catalytic domain"/>
    <property type="match status" value="1"/>
</dbReference>
<dbReference type="SUPFAM" id="SSF50249">
    <property type="entry name" value="Nucleic acid-binding proteins"/>
    <property type="match status" value="1"/>
</dbReference>
<dbReference type="PROSITE" id="PS00697">
    <property type="entry name" value="DNA_LIGASE_A1"/>
    <property type="match status" value="1"/>
</dbReference>
<dbReference type="PROSITE" id="PS00333">
    <property type="entry name" value="DNA_LIGASE_A2"/>
    <property type="match status" value="1"/>
</dbReference>
<dbReference type="PROSITE" id="PS50160">
    <property type="entry name" value="DNA_LIGASE_A3"/>
    <property type="match status" value="1"/>
</dbReference>